<reference key="1">
    <citation type="submission" date="2007-03" db="EMBL/GenBank/DDBJ databases">
        <title>Sequencing analysis of Draba nemoroza chloroplast DNA.</title>
        <authorList>
            <person name="Hosouchi T."/>
            <person name="Tsuruoka H."/>
            <person name="Kotani H."/>
        </authorList>
    </citation>
    <scope>NUCLEOTIDE SEQUENCE [LARGE SCALE GENOMIC DNA]</scope>
</reference>
<geneLocation type="chloroplast"/>
<name>PSAC_DRANE</name>
<evidence type="ECO:0000255" key="1">
    <source>
        <dbReference type="HAMAP-Rule" id="MF_01303"/>
    </source>
</evidence>
<feature type="chain" id="PRO_0000292119" description="Photosystem I iron-sulfur center">
    <location>
        <begin position="1"/>
        <end position="81"/>
    </location>
</feature>
<feature type="domain" description="4Fe-4S ferredoxin-type 1" evidence="1">
    <location>
        <begin position="2"/>
        <end position="31"/>
    </location>
</feature>
<feature type="domain" description="4Fe-4S ferredoxin-type 2" evidence="1">
    <location>
        <begin position="39"/>
        <end position="68"/>
    </location>
</feature>
<feature type="binding site" evidence="1">
    <location>
        <position position="11"/>
    </location>
    <ligand>
        <name>[4Fe-4S] cluster</name>
        <dbReference type="ChEBI" id="CHEBI:49883"/>
        <label>1</label>
    </ligand>
</feature>
<feature type="binding site" evidence="1">
    <location>
        <position position="14"/>
    </location>
    <ligand>
        <name>[4Fe-4S] cluster</name>
        <dbReference type="ChEBI" id="CHEBI:49883"/>
        <label>1</label>
    </ligand>
</feature>
<feature type="binding site" evidence="1">
    <location>
        <position position="17"/>
    </location>
    <ligand>
        <name>[4Fe-4S] cluster</name>
        <dbReference type="ChEBI" id="CHEBI:49883"/>
        <label>1</label>
    </ligand>
</feature>
<feature type="binding site" evidence="1">
    <location>
        <position position="21"/>
    </location>
    <ligand>
        <name>[4Fe-4S] cluster</name>
        <dbReference type="ChEBI" id="CHEBI:49883"/>
        <label>2</label>
    </ligand>
</feature>
<feature type="binding site" evidence="1">
    <location>
        <position position="48"/>
    </location>
    <ligand>
        <name>[4Fe-4S] cluster</name>
        <dbReference type="ChEBI" id="CHEBI:49883"/>
        <label>2</label>
    </ligand>
</feature>
<feature type="binding site" evidence="1">
    <location>
        <position position="51"/>
    </location>
    <ligand>
        <name>[4Fe-4S] cluster</name>
        <dbReference type="ChEBI" id="CHEBI:49883"/>
        <label>2</label>
    </ligand>
</feature>
<feature type="binding site" evidence="1">
    <location>
        <position position="54"/>
    </location>
    <ligand>
        <name>[4Fe-4S] cluster</name>
        <dbReference type="ChEBI" id="CHEBI:49883"/>
        <label>2</label>
    </ligand>
</feature>
<feature type="binding site" evidence="1">
    <location>
        <position position="58"/>
    </location>
    <ligand>
        <name>[4Fe-4S] cluster</name>
        <dbReference type="ChEBI" id="CHEBI:49883"/>
        <label>1</label>
    </ligand>
</feature>
<gene>
    <name evidence="1" type="primary">psaC</name>
</gene>
<accession>A4QL72</accession>
<proteinExistence type="inferred from homology"/>
<sequence>MSHSVKIYDTCIGCTQCVRACPTDVLEMIPWDGCKAKQIASAPRTEDCVGCKRCESACPTDFLSVRVYLWHETTRSMGLAY</sequence>
<organism>
    <name type="scientific">Draba nemorosa</name>
    <name type="common">Woodland whitlowgrass</name>
    <dbReference type="NCBI Taxonomy" id="171822"/>
    <lineage>
        <taxon>Eukaryota</taxon>
        <taxon>Viridiplantae</taxon>
        <taxon>Streptophyta</taxon>
        <taxon>Embryophyta</taxon>
        <taxon>Tracheophyta</taxon>
        <taxon>Spermatophyta</taxon>
        <taxon>Magnoliopsida</taxon>
        <taxon>eudicotyledons</taxon>
        <taxon>Gunneridae</taxon>
        <taxon>Pentapetalae</taxon>
        <taxon>rosids</taxon>
        <taxon>malvids</taxon>
        <taxon>Brassicales</taxon>
        <taxon>Brassicaceae</taxon>
        <taxon>Arabideae</taxon>
        <taxon>Draba</taxon>
    </lineage>
</organism>
<dbReference type="EC" id="1.97.1.12" evidence="1"/>
<dbReference type="EMBL" id="AP009373">
    <property type="protein sequence ID" value="BAF50427.1"/>
    <property type="molecule type" value="Genomic_DNA"/>
</dbReference>
<dbReference type="RefSeq" id="YP_001123602.1">
    <property type="nucleotide sequence ID" value="NC_009272.1"/>
</dbReference>
<dbReference type="SMR" id="A4QL72"/>
<dbReference type="GeneID" id="4964670"/>
<dbReference type="GO" id="GO:0009535">
    <property type="term" value="C:chloroplast thylakoid membrane"/>
    <property type="evidence" value="ECO:0007669"/>
    <property type="project" value="UniProtKB-SubCell"/>
</dbReference>
<dbReference type="GO" id="GO:0009522">
    <property type="term" value="C:photosystem I"/>
    <property type="evidence" value="ECO:0007669"/>
    <property type="project" value="UniProtKB-KW"/>
</dbReference>
<dbReference type="GO" id="GO:0051539">
    <property type="term" value="F:4 iron, 4 sulfur cluster binding"/>
    <property type="evidence" value="ECO:0007669"/>
    <property type="project" value="UniProtKB-KW"/>
</dbReference>
<dbReference type="GO" id="GO:0009055">
    <property type="term" value="F:electron transfer activity"/>
    <property type="evidence" value="ECO:0007669"/>
    <property type="project" value="UniProtKB-UniRule"/>
</dbReference>
<dbReference type="GO" id="GO:0046872">
    <property type="term" value="F:metal ion binding"/>
    <property type="evidence" value="ECO:0007669"/>
    <property type="project" value="UniProtKB-KW"/>
</dbReference>
<dbReference type="GO" id="GO:0016491">
    <property type="term" value="F:oxidoreductase activity"/>
    <property type="evidence" value="ECO:0007669"/>
    <property type="project" value="UniProtKB-KW"/>
</dbReference>
<dbReference type="GO" id="GO:0009773">
    <property type="term" value="P:photosynthetic electron transport in photosystem I"/>
    <property type="evidence" value="ECO:0007669"/>
    <property type="project" value="InterPro"/>
</dbReference>
<dbReference type="FunFam" id="3.30.70.20:FF:000001">
    <property type="entry name" value="Photosystem I iron-sulfur center"/>
    <property type="match status" value="1"/>
</dbReference>
<dbReference type="Gene3D" id="3.30.70.20">
    <property type="match status" value="1"/>
</dbReference>
<dbReference type="HAMAP" id="MF_01303">
    <property type="entry name" value="PSI_PsaC"/>
    <property type="match status" value="1"/>
</dbReference>
<dbReference type="InterPro" id="IPR017896">
    <property type="entry name" value="4Fe4S_Fe-S-bd"/>
</dbReference>
<dbReference type="InterPro" id="IPR017900">
    <property type="entry name" value="4Fe4S_Fe_S_CS"/>
</dbReference>
<dbReference type="InterPro" id="IPR050157">
    <property type="entry name" value="PSI_iron-sulfur_center"/>
</dbReference>
<dbReference type="InterPro" id="IPR017491">
    <property type="entry name" value="PSI_PsaC"/>
</dbReference>
<dbReference type="NCBIfam" id="TIGR03048">
    <property type="entry name" value="PS_I_psaC"/>
    <property type="match status" value="1"/>
</dbReference>
<dbReference type="PANTHER" id="PTHR24960:SF79">
    <property type="entry name" value="PHOTOSYSTEM I IRON-SULFUR CENTER"/>
    <property type="match status" value="1"/>
</dbReference>
<dbReference type="PANTHER" id="PTHR24960">
    <property type="entry name" value="PHOTOSYSTEM I IRON-SULFUR CENTER-RELATED"/>
    <property type="match status" value="1"/>
</dbReference>
<dbReference type="Pfam" id="PF14697">
    <property type="entry name" value="Fer4_21"/>
    <property type="match status" value="1"/>
</dbReference>
<dbReference type="SUPFAM" id="SSF54862">
    <property type="entry name" value="4Fe-4S ferredoxins"/>
    <property type="match status" value="1"/>
</dbReference>
<dbReference type="PROSITE" id="PS00198">
    <property type="entry name" value="4FE4S_FER_1"/>
    <property type="match status" value="2"/>
</dbReference>
<dbReference type="PROSITE" id="PS51379">
    <property type="entry name" value="4FE4S_FER_2"/>
    <property type="match status" value="2"/>
</dbReference>
<protein>
    <recommendedName>
        <fullName evidence="1">Photosystem I iron-sulfur center</fullName>
        <ecNumber evidence="1">1.97.1.12</ecNumber>
    </recommendedName>
    <alternativeName>
        <fullName evidence="1">9 kDa polypeptide</fullName>
    </alternativeName>
    <alternativeName>
        <fullName evidence="1">PSI-C</fullName>
    </alternativeName>
    <alternativeName>
        <fullName evidence="1">Photosystem I subunit VII</fullName>
    </alternativeName>
    <alternativeName>
        <fullName evidence="1">PsaC</fullName>
    </alternativeName>
</protein>
<keyword id="KW-0004">4Fe-4S</keyword>
<keyword id="KW-0150">Chloroplast</keyword>
<keyword id="KW-0249">Electron transport</keyword>
<keyword id="KW-0408">Iron</keyword>
<keyword id="KW-0411">Iron-sulfur</keyword>
<keyword id="KW-0472">Membrane</keyword>
<keyword id="KW-0479">Metal-binding</keyword>
<keyword id="KW-0560">Oxidoreductase</keyword>
<keyword id="KW-0602">Photosynthesis</keyword>
<keyword id="KW-0603">Photosystem I</keyword>
<keyword id="KW-0934">Plastid</keyword>
<keyword id="KW-0677">Repeat</keyword>
<keyword id="KW-0793">Thylakoid</keyword>
<keyword id="KW-0813">Transport</keyword>
<comment type="function">
    <text evidence="1">Apoprotein for the two 4Fe-4S centers FA and FB of photosystem I (PSI); essential for photochemical activity. FB is the terminal electron acceptor of PSI, donating electrons to ferredoxin. The C-terminus interacts with PsaA/B/D and helps assemble the protein into the PSI complex. Required for binding of PsaD and PsaE to PSI. PSI is a plastocyanin-ferredoxin oxidoreductase, converting photonic excitation into a charge separation, which transfers an electron from the donor P700 chlorophyll pair to the spectroscopically characterized acceptors A0, A1, FX, FA and FB in turn.</text>
</comment>
<comment type="catalytic activity">
    <reaction evidence="1">
        <text>reduced [plastocyanin] + hnu + oxidized [2Fe-2S]-[ferredoxin] = oxidized [plastocyanin] + reduced [2Fe-2S]-[ferredoxin]</text>
        <dbReference type="Rhea" id="RHEA:30407"/>
        <dbReference type="Rhea" id="RHEA-COMP:10000"/>
        <dbReference type="Rhea" id="RHEA-COMP:10001"/>
        <dbReference type="Rhea" id="RHEA-COMP:10039"/>
        <dbReference type="Rhea" id="RHEA-COMP:10040"/>
        <dbReference type="ChEBI" id="CHEBI:29036"/>
        <dbReference type="ChEBI" id="CHEBI:30212"/>
        <dbReference type="ChEBI" id="CHEBI:33737"/>
        <dbReference type="ChEBI" id="CHEBI:33738"/>
        <dbReference type="ChEBI" id="CHEBI:49552"/>
        <dbReference type="EC" id="1.97.1.12"/>
    </reaction>
</comment>
<comment type="cofactor">
    <cofactor evidence="1">
        <name>[4Fe-4S] cluster</name>
        <dbReference type="ChEBI" id="CHEBI:49883"/>
    </cofactor>
    <text evidence="1">Binds 2 [4Fe-4S] clusters. Cluster 2 is most probably the spectroscopically characterized electron acceptor FA and cluster 1 is most probably FB.</text>
</comment>
<comment type="subunit">
    <text evidence="1">The eukaryotic PSI reaction center is composed of at least 11 subunits.</text>
</comment>
<comment type="subcellular location">
    <subcellularLocation>
        <location evidence="1">Plastid</location>
        <location evidence="1">Chloroplast thylakoid membrane</location>
        <topology evidence="1">Peripheral membrane protein</topology>
        <orientation evidence="1">Stromal side</orientation>
    </subcellularLocation>
</comment>